<organism>
    <name type="scientific">Xenopus laevis</name>
    <name type="common">African clawed frog</name>
    <dbReference type="NCBI Taxonomy" id="8355"/>
    <lineage>
        <taxon>Eukaryota</taxon>
        <taxon>Metazoa</taxon>
        <taxon>Chordata</taxon>
        <taxon>Craniata</taxon>
        <taxon>Vertebrata</taxon>
        <taxon>Euteleostomi</taxon>
        <taxon>Amphibia</taxon>
        <taxon>Batrachia</taxon>
        <taxon>Anura</taxon>
        <taxon>Pipoidea</taxon>
        <taxon>Pipidae</taxon>
        <taxon>Xenopodinae</taxon>
        <taxon>Xenopus</taxon>
        <taxon>Xenopus</taxon>
    </lineage>
</organism>
<feature type="chain" id="PRO_0000307402" description="Ropporin-1-like protein">
    <location>
        <begin position="1"/>
        <end position="219"/>
    </location>
</feature>
<feature type="domain" description="RIIa">
    <location>
        <begin position="17"/>
        <end position="54"/>
    </location>
</feature>
<comment type="function">
    <text evidence="2">Functions as part of axonemal radial spoke complexes that play an important part in the motility of sperm and cilia. Important for male fertility. Involved in fibrous sheath integrity and sperm motility, plays a role in PKA-dependent signaling processes required for spermatozoa capacitation.</text>
</comment>
<comment type="subunit">
    <text evidence="2">Component of axonemal radial spoke complexes (By similarity).</text>
</comment>
<comment type="subcellular location">
    <subcellularLocation>
        <location evidence="2">Cell projection</location>
        <location evidence="2">Cilium</location>
        <location evidence="2">Flagellum</location>
    </subcellularLocation>
    <subcellularLocation>
        <location evidence="1">Cell projection</location>
        <location evidence="1">Cilium</location>
    </subcellularLocation>
</comment>
<comment type="similarity">
    <text evidence="3">Belongs to the ropporin family.</text>
</comment>
<dbReference type="EMBL" id="BC097722">
    <property type="protein sequence ID" value="AAH97722.1"/>
    <property type="molecule type" value="mRNA"/>
</dbReference>
<dbReference type="RefSeq" id="NP_001089491.1">
    <property type="nucleotide sequence ID" value="NM_001096022.1"/>
</dbReference>
<dbReference type="SMR" id="Q4V7T8"/>
<dbReference type="DNASU" id="734543"/>
<dbReference type="GeneID" id="734543"/>
<dbReference type="KEGG" id="xla:734543"/>
<dbReference type="AGR" id="Xenbase:XB-GENE-945783"/>
<dbReference type="CTD" id="734543"/>
<dbReference type="Xenbase" id="XB-GENE-945783">
    <property type="gene designation" value="ropn1l.L"/>
</dbReference>
<dbReference type="OMA" id="QWSSAYF"/>
<dbReference type="OrthoDB" id="10067602at2759"/>
<dbReference type="Proteomes" id="UP000186698">
    <property type="component" value="Chromosome 6L"/>
</dbReference>
<dbReference type="Bgee" id="734543">
    <property type="expression patterns" value="Expressed in egg cell and 11 other cell types or tissues"/>
</dbReference>
<dbReference type="GO" id="GO:0031514">
    <property type="term" value="C:motile cilium"/>
    <property type="evidence" value="ECO:0007669"/>
    <property type="project" value="UniProtKB-SubCell"/>
</dbReference>
<dbReference type="GO" id="GO:0001534">
    <property type="term" value="C:radial spoke"/>
    <property type="evidence" value="ECO:0000250"/>
    <property type="project" value="UniProtKB"/>
</dbReference>
<dbReference type="CDD" id="cd23019">
    <property type="entry name" value="DD_ROP"/>
    <property type="match status" value="1"/>
</dbReference>
<dbReference type="FunFam" id="1.20.890.10:FF:000004">
    <property type="entry name" value="ropporin-1-like protein isoform X2"/>
    <property type="match status" value="1"/>
</dbReference>
<dbReference type="Gene3D" id="1.20.890.10">
    <property type="entry name" value="cAMP-dependent protein kinase regulatory subunit, dimerization-anchoring domain"/>
    <property type="match status" value="1"/>
</dbReference>
<dbReference type="InterPro" id="IPR047844">
    <property type="entry name" value="ROP_DD"/>
</dbReference>
<dbReference type="PANTHER" id="PTHR14952">
    <property type="entry name" value="ROPPORIN-1-LIKE PROTEIN"/>
    <property type="match status" value="1"/>
</dbReference>
<dbReference type="PANTHER" id="PTHR14952:SF14">
    <property type="entry name" value="ROPPORIN-1-LIKE PROTEIN"/>
    <property type="match status" value="1"/>
</dbReference>
<dbReference type="SUPFAM" id="SSF47391">
    <property type="entry name" value="Dimerization-anchoring domain of cAMP-dependent PK regulatory subunit"/>
    <property type="match status" value="1"/>
</dbReference>
<evidence type="ECO:0000250" key="1">
    <source>
        <dbReference type="UniProtKB" id="Q96C74"/>
    </source>
</evidence>
<evidence type="ECO:0000250" key="2">
    <source>
        <dbReference type="UniProtKB" id="Q9EQ00"/>
    </source>
</evidence>
<evidence type="ECO:0000305" key="3"/>
<keyword id="KW-0966">Cell projection</keyword>
<keyword id="KW-0969">Cilium</keyword>
<keyword id="KW-0282">Flagellum</keyword>
<keyword id="KW-1185">Reference proteome</keyword>
<gene>
    <name type="primary">ropn1l</name>
</gene>
<protein>
    <recommendedName>
        <fullName>Ropporin-1-like protein</fullName>
    </recommendedName>
</protein>
<reference key="1">
    <citation type="submission" date="2005-06" db="EMBL/GenBank/DDBJ databases">
        <authorList>
            <consortium name="NIH - Xenopus Gene Collection (XGC) project"/>
        </authorList>
    </citation>
    <scope>NUCLEOTIDE SEQUENCE [LARGE SCALE MRNA]</scope>
    <source>
        <tissue>Egg</tissue>
    </source>
</reference>
<sequence>MPPPETMFCAQQINIPPELPDILKQFTKAAIRTQPHDLLQWSAAYFDSLSKGEPLPVKDRVELQVATQKTDSGLTPGLLKVLNKQLSSKMSVKIADLKQKWTDLCLPEEQLQNILGLDNFQDDIDWLKFLSLGCSALGGSISSALKYACEILTEDPEGGAAHIPFDTFTYIYKYLAHIDGDISEMQIEDVLNVLQSEAERQNGLIQPRNFLSSQCPLLS</sequence>
<accession>Q4V7T8</accession>
<proteinExistence type="evidence at transcript level"/>
<name>ROP1L_XENLA</name>